<comment type="function">
    <text evidence="5 6 7 8 9 10">Removes the secondary (acyloxyacyl-linked) fatty acyl chains from the lipid A region of bacterial lipopolysaccharides (LPS) (PubMed:12810692, PubMed:15155618, PubMed:17322564, PubMed:19860560). By breaking down LPS, terminates the host response to bacterial infection and prevents prolonged and damaging inflammatory responses (PubMed:17322564, PubMed:19860560, PubMed:28622363). In peritoneal macrophages, seems to be important for recovery from a state of immune tolerance following infection by Gram-negative bacteria (PubMed:18779055).</text>
</comment>
<comment type="catalytic activity">
    <reaction evidence="14 15 16 17 18">
        <text>a 3-(acyloxy)acyl derivative of bacterial toxin + H2O = a 3-hydroxyacyl derivative of bacterial toxin + a fatty acid + H(+)</text>
        <dbReference type="Rhea" id="RHEA:12032"/>
        <dbReference type="ChEBI" id="CHEBI:15377"/>
        <dbReference type="ChEBI" id="CHEBI:15378"/>
        <dbReference type="ChEBI" id="CHEBI:28868"/>
        <dbReference type="ChEBI" id="CHEBI:136853"/>
        <dbReference type="ChEBI" id="CHEBI:140675"/>
        <dbReference type="EC" id="3.1.1.77"/>
    </reaction>
</comment>
<comment type="cofactor">
    <cofactor evidence="11">
        <name>Ca(2+)</name>
        <dbReference type="ChEBI" id="CHEBI:29108"/>
    </cofactor>
    <text evidence="11">Binds 3 Ca(2+) ions per subunit. The calcium ions probably have a structural role.</text>
</comment>
<comment type="subunit">
    <text evidence="15 19">Heterodimer of the large and small subunits; disulfide-linked.</text>
</comment>
<comment type="subcellular location">
    <subcellularLocation>
        <location evidence="6">Secreted</location>
    </subcellularLocation>
    <subcellularLocation>
        <location evidence="2">Cytoplasmic vesicle</location>
    </subcellularLocation>
    <text evidence="6">Detected in urine.</text>
</comment>
<comment type="tissue specificity">
    <text evidence="5 6 7 10">Detected in peritoneal macrophages (at protein level) (PubMed:17322564, PubMed:28622363). Strongly expressed in kidney cortex, where it may be produced by proximal tubule cells (PubMed:15155618). In liver, expressed at high levels in Kupffer cells (PubMed:17322564). Expressed by dendritic cells (PubMed:12810692). Detected at low levels in alveolar macrophages (PubMed:28622363).</text>
</comment>
<comment type="induction">
    <text evidence="10">Strongly up-regulated in alveolar macrophages in response to bacterial lipopolysaccharides (LPS).</text>
</comment>
<comment type="PTM">
    <text evidence="2">Cleaved into a large and a small subunit.</text>
</comment>
<comment type="PTM">
    <text evidence="2">The small subunit is N-glycosylated.</text>
</comment>
<comment type="disruption phenotype">
    <text evidence="5 7 8 10">Animals develop significant and prolonged hepatosplenomegaly in response to bacterial lipopolysaccharide (LPS) challenge (PubMed:17322564). Both liver and spleen show increased accumulation of leukocytes (PubMed:17322564). Significantly reduced deacylation of LPS in liver and spleen, in peritoneal macrophages, and in bone marrow-derived dendritic cells (PubMed:12810692, PubMed:17322564, PubMed:18779055). Increased lung injury, delayed neutrophil clearance, and prolonged recovery time in response to intranasal LPS administration (PubMed:28622363). Alveolar macrophages show persistent activation and cytokine levels in lung remain elevated 4-7 days after LPS administration (PubMed:28622363). Impaired response to a second infection challenge, with reduced production of the pro-inflammatory chemokines CCL5/RANTES, TNF and IL6 by peritoneal macrophages and reduced survival rates, indicating a prolonged state of immune tolerance (PubMed:18779055). This immune tolerant state can perisist for two months or longer (PubMed:18779055).</text>
</comment>
<accession>O35298</accession>
<proteinExistence type="evidence at protein level"/>
<keyword id="KW-0002">3D-structure</keyword>
<keyword id="KW-0106">Calcium</keyword>
<keyword id="KW-0968">Cytoplasmic vesicle</keyword>
<keyword id="KW-1015">Disulfide bond</keyword>
<keyword id="KW-0325">Glycoprotein</keyword>
<keyword id="KW-0378">Hydrolase</keyword>
<keyword id="KW-0443">Lipid metabolism</keyword>
<keyword id="KW-0479">Metal-binding</keyword>
<keyword id="KW-1185">Reference proteome</keyword>
<keyword id="KW-0964">Secreted</keyword>
<keyword id="KW-0732">Signal</keyword>
<keyword id="KW-0865">Zymogen</keyword>
<dbReference type="EC" id="3.1.1.77" evidence="14 15 16 17 18"/>
<dbReference type="EMBL" id="AF018172">
    <property type="protein sequence ID" value="AAB81182.1"/>
    <property type="molecule type" value="mRNA"/>
</dbReference>
<dbReference type="EMBL" id="AK084452">
    <property type="protein sequence ID" value="BAC39187.1"/>
    <property type="molecule type" value="mRNA"/>
</dbReference>
<dbReference type="CCDS" id="CCDS26266.1"/>
<dbReference type="RefSeq" id="NP_001268783.1">
    <property type="nucleotide sequence ID" value="NM_001281854.1"/>
</dbReference>
<dbReference type="RefSeq" id="NP_036184.1">
    <property type="nucleotide sequence ID" value="NM_012054.4"/>
</dbReference>
<dbReference type="PDB" id="5W7D">
    <property type="method" value="X-ray"/>
    <property type="resolution" value="1.75 A"/>
    <property type="chains" value="A=23-574"/>
</dbReference>
<dbReference type="PDB" id="5W7E">
    <property type="method" value="X-ray"/>
    <property type="resolution" value="1.83 A"/>
    <property type="chains" value="A/B=23-574"/>
</dbReference>
<dbReference type="PDB" id="5W7F">
    <property type="method" value="X-ray"/>
    <property type="resolution" value="2.80 A"/>
    <property type="chains" value="A/B=23-574"/>
</dbReference>
<dbReference type="PDBsum" id="5W7D"/>
<dbReference type="PDBsum" id="5W7E"/>
<dbReference type="PDBsum" id="5W7F"/>
<dbReference type="SMR" id="O35298"/>
<dbReference type="BioGRID" id="205107">
    <property type="interactions" value="1"/>
</dbReference>
<dbReference type="FunCoup" id="O35298">
    <property type="interactions" value="83"/>
</dbReference>
<dbReference type="STRING" id="10090.ENSMUSP00000021757"/>
<dbReference type="GlyCosmos" id="O35298">
    <property type="glycosylation" value="4 sites, No reported glycans"/>
</dbReference>
<dbReference type="GlyGen" id="O35298">
    <property type="glycosylation" value="4 sites"/>
</dbReference>
<dbReference type="iPTMnet" id="O35298"/>
<dbReference type="PhosphoSitePlus" id="O35298"/>
<dbReference type="PaxDb" id="10090-ENSMUSP00000021757"/>
<dbReference type="ProteomicsDB" id="296260"/>
<dbReference type="Antibodypedia" id="26560">
    <property type="antibodies" value="146 antibodies from 24 providers"/>
</dbReference>
<dbReference type="DNASU" id="27052"/>
<dbReference type="Ensembl" id="ENSMUST00000021757.5">
    <property type="protein sequence ID" value="ENSMUSP00000021757.4"/>
    <property type="gene ID" value="ENSMUSG00000021322.9"/>
</dbReference>
<dbReference type="GeneID" id="27052"/>
<dbReference type="KEGG" id="mmu:27052"/>
<dbReference type="UCSC" id="uc007ppu.2">
    <property type="organism name" value="mouse"/>
</dbReference>
<dbReference type="AGR" id="MGI:1350928"/>
<dbReference type="CTD" id="313"/>
<dbReference type="MGI" id="MGI:1350928">
    <property type="gene designation" value="Aoah"/>
</dbReference>
<dbReference type="VEuPathDB" id="HostDB:ENSMUSG00000021322"/>
<dbReference type="eggNOG" id="ENOG502QVQW">
    <property type="taxonomic scope" value="Eukaryota"/>
</dbReference>
<dbReference type="GeneTree" id="ENSGT00390000008427"/>
<dbReference type="HOGENOM" id="CLU_025769_0_0_1"/>
<dbReference type="InParanoid" id="O35298"/>
<dbReference type="OMA" id="PFCHLYP"/>
<dbReference type="OrthoDB" id="14839at2759"/>
<dbReference type="PhylomeDB" id="O35298"/>
<dbReference type="TreeFam" id="TF329246"/>
<dbReference type="BRENDA" id="3.1.1.77">
    <property type="organism ID" value="3474"/>
</dbReference>
<dbReference type="BioGRID-ORCS" id="27052">
    <property type="hits" value="1 hit in 80 CRISPR screens"/>
</dbReference>
<dbReference type="ChiTaRS" id="Aoah">
    <property type="organism name" value="mouse"/>
</dbReference>
<dbReference type="PRO" id="PR:O35298"/>
<dbReference type="Proteomes" id="UP000000589">
    <property type="component" value="Chromosome 13"/>
</dbReference>
<dbReference type="RNAct" id="O35298">
    <property type="molecule type" value="protein"/>
</dbReference>
<dbReference type="Bgee" id="ENSMUSG00000021322">
    <property type="expression patterns" value="Expressed in granulocyte and 57 other cell types or tissues"/>
</dbReference>
<dbReference type="ExpressionAtlas" id="O35298">
    <property type="expression patterns" value="baseline and differential"/>
</dbReference>
<dbReference type="GO" id="GO:0031410">
    <property type="term" value="C:cytoplasmic vesicle"/>
    <property type="evidence" value="ECO:0007669"/>
    <property type="project" value="UniProtKB-KW"/>
</dbReference>
<dbReference type="GO" id="GO:0005576">
    <property type="term" value="C:extracellular region"/>
    <property type="evidence" value="ECO:0007669"/>
    <property type="project" value="UniProtKB-SubCell"/>
</dbReference>
<dbReference type="GO" id="GO:0050528">
    <property type="term" value="F:acyloxyacyl hydrolase activity"/>
    <property type="evidence" value="ECO:0000314"/>
    <property type="project" value="MGI"/>
</dbReference>
<dbReference type="GO" id="GO:0005509">
    <property type="term" value="F:calcium ion binding"/>
    <property type="evidence" value="ECO:0000314"/>
    <property type="project" value="UniProtKB"/>
</dbReference>
<dbReference type="GO" id="GO:0006631">
    <property type="term" value="P:fatty acid metabolic process"/>
    <property type="evidence" value="ECO:0000250"/>
    <property type="project" value="UniProtKB"/>
</dbReference>
<dbReference type="GO" id="GO:0009104">
    <property type="term" value="P:lipopolysaccharide catabolic process"/>
    <property type="evidence" value="ECO:0000250"/>
    <property type="project" value="UniProtKB"/>
</dbReference>
<dbReference type="GO" id="GO:0008653">
    <property type="term" value="P:lipopolysaccharide metabolic process"/>
    <property type="evidence" value="ECO:0000314"/>
    <property type="project" value="MGI"/>
</dbReference>
<dbReference type="GO" id="GO:0050728">
    <property type="term" value="P:negative regulation of inflammatory response"/>
    <property type="evidence" value="ECO:0000314"/>
    <property type="project" value="MGI"/>
</dbReference>
<dbReference type="CDD" id="cd01826">
    <property type="entry name" value="acyloxyacyl_hydrolase_like"/>
    <property type="match status" value="1"/>
</dbReference>
<dbReference type="Gene3D" id="1.10.225.10">
    <property type="entry name" value="Saposin-like"/>
    <property type="match status" value="1"/>
</dbReference>
<dbReference type="Gene3D" id="3.40.50.1110">
    <property type="entry name" value="SGNH hydrolase"/>
    <property type="match status" value="1"/>
</dbReference>
<dbReference type="InterPro" id="IPR039676">
    <property type="entry name" value="AOAH"/>
</dbReference>
<dbReference type="InterPro" id="IPR048593">
    <property type="entry name" value="AOAH_Saposin_N"/>
</dbReference>
<dbReference type="InterPro" id="IPR001087">
    <property type="entry name" value="GDSL"/>
</dbReference>
<dbReference type="InterPro" id="IPR011001">
    <property type="entry name" value="Saposin-like"/>
</dbReference>
<dbReference type="InterPro" id="IPR008139">
    <property type="entry name" value="SaposinB_dom"/>
</dbReference>
<dbReference type="InterPro" id="IPR036514">
    <property type="entry name" value="SGNH_hydro_sf"/>
</dbReference>
<dbReference type="PANTHER" id="PTHR15010">
    <property type="entry name" value="ACYLOXYACYL HYDROLASE"/>
    <property type="match status" value="1"/>
</dbReference>
<dbReference type="PANTHER" id="PTHR15010:SF0">
    <property type="entry name" value="ACYLOXYACYL HYDROLASE"/>
    <property type="match status" value="1"/>
</dbReference>
<dbReference type="Pfam" id="PF00657">
    <property type="entry name" value="Lipase_GDSL"/>
    <property type="match status" value="1"/>
</dbReference>
<dbReference type="Pfam" id="PF20825">
    <property type="entry name" value="Saposin"/>
    <property type="match status" value="1"/>
</dbReference>
<dbReference type="SMART" id="SM00741">
    <property type="entry name" value="SapB"/>
    <property type="match status" value="1"/>
</dbReference>
<dbReference type="SUPFAM" id="SSF47862">
    <property type="entry name" value="Saposin"/>
    <property type="match status" value="1"/>
</dbReference>
<dbReference type="SUPFAM" id="SSF52266">
    <property type="entry name" value="SGNH hydrolase"/>
    <property type="match status" value="1"/>
</dbReference>
<dbReference type="PROSITE" id="PS50015">
    <property type="entry name" value="SAP_B"/>
    <property type="match status" value="1"/>
</dbReference>
<name>AOAH_MOUSE</name>
<sequence length="574" mass="65155">MKFPWKVFKTTLLLLLLSHSLASVPSEDQPGDSYSHGQSCLGCVVLVSVIEQLAEVHNSSVQVAMERLCSYLPEKLFLKTACYFLVQTFGSDIIKLLDEAMKADVVCYALEFCKRGAVQPQCHLYPLPQEAWESALEKARQVLRRSSTMKYPRSGRNICSLPFLTKICQKIELSIKKAVPFKDIDSDKHSVFPTLRGYHWRGRDCNDSDKTVYPGRRPDNWDIHQDSNCNGIWGIDPKDGIPYEKKFCEGSQPRGIILLGDSAGAHFHIPPEWLTASQMSVNSFLNLPSALTDELNWPQLSGVTGFLDSTSGIEEKSIYHRLRKRNHCNHRDYQSISKNGASSRNLKNFIESLSRNQASDHPAIVLYAMIGNDVCNSKADTVPEMTTPEQMYANVMQTLTHLNSHLPNGSHVILYGLPDGTFLWDSLHNRYHPLGQLNKDVTYAQFFSFLRCLQLNPCNGWMSSNKTLRTLTSERAEQLSNTLKKIATTETFANFDLFYVDFAFHEIIEDWQKRGGQPWQLIEPVDGFHPNEVASLLQANRVWEKIQLQWPHVLGKENPFNSQIEEVFGDQGGH</sequence>
<feature type="signal peptide" evidence="2">
    <location>
        <begin position="1"/>
        <end position="22"/>
    </location>
</feature>
<feature type="propeptide" id="PRO_0000041812" evidence="2">
    <location>
        <begin position="23"/>
        <end position="33"/>
    </location>
</feature>
<feature type="chain" id="PRO_0000041813" description="Acyloxyacyl hydrolase small subunit" evidence="2">
    <location>
        <begin position="34"/>
        <end position="155"/>
    </location>
</feature>
<feature type="chain" id="PRO_0000041814" description="Acyloxyacyl hydrolase large subunit" evidence="2">
    <location>
        <begin position="156"/>
        <end position="574"/>
    </location>
</feature>
<feature type="domain" description="Saposin B-type" evidence="4">
    <location>
        <begin position="36"/>
        <end position="117"/>
    </location>
</feature>
<feature type="region of interest" description="Important for enzyme activity, localization to cytoplasmic vesicles, and protein stability" evidence="2">
    <location>
        <begin position="37"/>
        <end position="69"/>
    </location>
</feature>
<feature type="region of interest" description="Lipopolysaccharide binding" evidence="1">
    <location>
        <begin position="172"/>
        <end position="176"/>
    </location>
</feature>
<feature type="active site" evidence="19">
    <location>
        <position position="262"/>
    </location>
</feature>
<feature type="binding site" evidence="11 20 21 22">
    <location>
        <position position="183"/>
    </location>
    <ligand>
        <name>Ca(2+)</name>
        <dbReference type="ChEBI" id="CHEBI:29108"/>
        <label>1</label>
    </ligand>
</feature>
<feature type="binding site" evidence="11 20 21 22">
    <location>
        <position position="185"/>
    </location>
    <ligand>
        <name>Ca(2+)</name>
        <dbReference type="ChEBI" id="CHEBI:29108"/>
        <label>1</label>
    </ligand>
</feature>
<feature type="binding site" evidence="11 20 21 22">
    <location>
        <position position="185"/>
    </location>
    <ligand>
        <name>Ca(2+)</name>
        <dbReference type="ChEBI" id="CHEBI:29108"/>
        <label>2</label>
    </ligand>
</feature>
<feature type="binding site" evidence="11 20 21 22">
    <location>
        <position position="187"/>
    </location>
    <ligand>
        <name>Ca(2+)</name>
        <dbReference type="ChEBI" id="CHEBI:29108"/>
        <label>1</label>
    </ligand>
</feature>
<feature type="binding site" evidence="11 20 21 22">
    <location>
        <position position="187"/>
    </location>
    <ligand>
        <name>Ca(2+)</name>
        <dbReference type="ChEBI" id="CHEBI:29108"/>
        <label>2</label>
    </ligand>
</feature>
<feature type="binding site" evidence="11 20 21 22">
    <location>
        <position position="189"/>
    </location>
    <ligand>
        <name>Ca(2+)</name>
        <dbReference type="ChEBI" id="CHEBI:29108"/>
        <label>1</label>
    </ligand>
</feature>
<feature type="binding site" evidence="11 20 21 22">
    <location>
        <position position="204"/>
    </location>
    <ligand>
        <name>Ca(2+)</name>
        <dbReference type="ChEBI" id="CHEBI:29108"/>
        <label>1</label>
    </ligand>
</feature>
<feature type="binding site" evidence="11 20 21 22">
    <location>
        <position position="204"/>
    </location>
    <ligand>
        <name>Ca(2+)</name>
        <dbReference type="ChEBI" id="CHEBI:29108"/>
        <label>2</label>
    </ligand>
</feature>
<feature type="binding site" evidence="11 20 21 22">
    <location>
        <position position="206"/>
    </location>
    <ligand>
        <name>Ca(2+)</name>
        <dbReference type="ChEBI" id="CHEBI:29108"/>
        <label>2</label>
    </ligand>
</feature>
<feature type="binding site" evidence="11 20 21 22">
    <location>
        <position position="207"/>
    </location>
    <ligand>
        <name>Ca(2+)</name>
        <dbReference type="ChEBI" id="CHEBI:29108"/>
        <label>1</label>
    </ligand>
</feature>
<feature type="binding site" evidence="11 20 21 22">
    <location>
        <position position="209"/>
    </location>
    <ligand>
        <name>Ca(2+)</name>
        <dbReference type="ChEBI" id="CHEBI:29108"/>
        <label>2</label>
    </ligand>
</feature>
<feature type="binding site" evidence="11 20 21 22">
    <location>
        <position position="212"/>
    </location>
    <ligand>
        <name>Ca(2+)</name>
        <dbReference type="ChEBI" id="CHEBI:29108"/>
        <label>2</label>
    </ligand>
</feature>
<feature type="binding site" evidence="11 20 21 22">
    <location>
        <position position="222"/>
    </location>
    <ligand>
        <name>Ca(2+)</name>
        <dbReference type="ChEBI" id="CHEBI:29108"/>
        <label>3</label>
    </ligand>
</feature>
<feature type="binding site" evidence="11 20 21 22">
    <location>
        <position position="226"/>
    </location>
    <ligand>
        <name>Ca(2+)</name>
        <dbReference type="ChEBI" id="CHEBI:29108"/>
        <label>3</label>
    </ligand>
</feature>
<feature type="binding site" evidence="11 20 21 22">
    <location>
        <position position="228"/>
    </location>
    <ligand>
        <name>Ca(2+)</name>
        <dbReference type="ChEBI" id="CHEBI:29108"/>
        <label>3</label>
    </ligand>
</feature>
<feature type="binding site" evidence="11 20 21 22">
    <location>
        <position position="230"/>
    </location>
    <ligand>
        <name>Ca(2+)</name>
        <dbReference type="ChEBI" id="CHEBI:29108"/>
        <label>3</label>
    </ligand>
</feature>
<feature type="binding site" evidence="11 20 21 22">
    <location>
        <position position="232"/>
    </location>
    <ligand>
        <name>Ca(2+)</name>
        <dbReference type="ChEBI" id="CHEBI:29108"/>
        <label>3</label>
    </ligand>
</feature>
<feature type="binding site" evidence="11 20 21 22">
    <location>
        <position position="244"/>
    </location>
    <ligand>
        <name>Ca(2+)</name>
        <dbReference type="ChEBI" id="CHEBI:29108"/>
        <label>3</label>
    </ligand>
</feature>
<feature type="site" description="Interacts with lipopolysaccharide" evidence="1">
    <location>
        <position position="344"/>
    </location>
</feature>
<feature type="glycosylation site" description="N-linked (GlcNAc...) asparagine" evidence="3">
    <location>
        <position position="58"/>
    </location>
</feature>
<feature type="glycosylation site" description="N-linked (GlcNAc...) asparagine" evidence="11 21">
    <location>
        <position position="206"/>
    </location>
</feature>
<feature type="glycosylation site" description="N-linked (GlcNAc...) asparagine" evidence="11 20">
    <location>
        <position position="408"/>
    </location>
</feature>
<feature type="glycosylation site" description="N-linked (GlcNAc...) asparagine" evidence="11 22">
    <location>
        <position position="465"/>
    </location>
</feature>
<feature type="disulfide bond" evidence="4 11 20 21 22">
    <location>
        <begin position="40"/>
        <end position="113"/>
    </location>
</feature>
<feature type="disulfide bond" evidence="4 11 20 21 22">
    <location>
        <begin position="43"/>
        <end position="107"/>
    </location>
</feature>
<feature type="disulfide bond" evidence="4 11 20 21 22">
    <location>
        <begin position="69"/>
        <end position="82"/>
    </location>
</feature>
<feature type="disulfide bond" evidence="11 20 21 22">
    <location>
        <begin position="122"/>
        <end position="452"/>
    </location>
</feature>
<feature type="disulfide bond" description="Interchain (between small and large subunit)" evidence="1">
    <location>
        <begin position="122"/>
        <end position="452"/>
    </location>
</feature>
<feature type="disulfide bond" evidence="11 20 21 22">
    <location>
        <begin position="159"/>
        <end position="168"/>
    </location>
</feature>
<feature type="disulfide bond" evidence="11 20 21 22">
    <location>
        <begin position="205"/>
        <end position="229"/>
    </location>
</feature>
<feature type="disulfide bond" evidence="11 20 21 22">
    <location>
        <begin position="248"/>
        <end position="328"/>
    </location>
</feature>
<feature type="disulfide bond" evidence="11 20 21 22">
    <location>
        <begin position="375"/>
        <end position="458"/>
    </location>
</feature>
<feature type="mutagenesis site" description="Loss of catalytic activity." evidence="11">
    <original>S</original>
    <variation>A</variation>
    <location>
        <position position="262"/>
    </location>
</feature>
<feature type="helix" evidence="23">
    <location>
        <begin position="36"/>
        <end position="57"/>
    </location>
</feature>
<feature type="helix" evidence="23">
    <location>
        <begin position="61"/>
        <end position="71"/>
    </location>
</feature>
<feature type="helix" evidence="23">
    <location>
        <begin position="75"/>
        <end position="77"/>
    </location>
</feature>
<feature type="helix" evidence="23">
    <location>
        <begin position="78"/>
        <end position="97"/>
    </location>
</feature>
<feature type="turn" evidence="23">
    <location>
        <begin position="98"/>
        <end position="100"/>
    </location>
</feature>
<feature type="helix" evidence="23">
    <location>
        <begin position="103"/>
        <end position="109"/>
    </location>
</feature>
<feature type="helix" evidence="23">
    <location>
        <begin position="129"/>
        <end position="145"/>
    </location>
</feature>
<feature type="helix" evidence="23">
    <location>
        <begin position="164"/>
        <end position="176"/>
    </location>
</feature>
<feature type="strand" evidence="23">
    <location>
        <begin position="191"/>
        <end position="194"/>
    </location>
</feature>
<feature type="turn" evidence="23">
    <location>
        <begin position="198"/>
        <end position="200"/>
    </location>
</feature>
<feature type="helix" evidence="23">
    <location>
        <begin position="220"/>
        <end position="222"/>
    </location>
</feature>
<feature type="strand" evidence="23">
    <location>
        <begin position="223"/>
        <end position="225"/>
    </location>
</feature>
<feature type="strand" evidence="23">
    <location>
        <begin position="229"/>
        <end position="231"/>
    </location>
</feature>
<feature type="turn" evidence="23">
    <location>
        <begin position="237"/>
        <end position="239"/>
    </location>
</feature>
<feature type="helix" evidence="23">
    <location>
        <begin position="243"/>
        <end position="248"/>
    </location>
</feature>
<feature type="strand" evidence="23">
    <location>
        <begin position="255"/>
        <end position="260"/>
    </location>
</feature>
<feature type="turn" evidence="23">
    <location>
        <begin position="262"/>
        <end position="266"/>
    </location>
</feature>
<feature type="helix" evidence="23">
    <location>
        <begin position="271"/>
        <end position="273"/>
    </location>
</feature>
<feature type="helix" evidence="23">
    <location>
        <begin position="276"/>
        <end position="278"/>
    </location>
</feature>
<feature type="helix" evidence="23">
    <location>
        <begin position="281"/>
        <end position="284"/>
    </location>
</feature>
<feature type="helix" evidence="23">
    <location>
        <begin position="287"/>
        <end position="292"/>
    </location>
</feature>
<feature type="turn" evidence="23">
    <location>
        <begin position="293"/>
        <end position="295"/>
    </location>
</feature>
<feature type="helix" evidence="23">
    <location>
        <begin position="298"/>
        <end position="300"/>
    </location>
</feature>
<feature type="turn" evidence="23">
    <location>
        <begin position="302"/>
        <end position="304"/>
    </location>
</feature>
<feature type="helix" evidence="23">
    <location>
        <begin position="318"/>
        <end position="325"/>
    </location>
</feature>
<feature type="helix" evidence="23">
    <location>
        <begin position="327"/>
        <end position="329"/>
    </location>
</feature>
<feature type="strand" evidence="23">
    <location>
        <begin position="333"/>
        <end position="337"/>
    </location>
</feature>
<feature type="turn" evidence="23">
    <location>
        <begin position="343"/>
        <end position="345"/>
    </location>
</feature>
<feature type="helix" evidence="23">
    <location>
        <begin position="346"/>
        <end position="348"/>
    </location>
</feature>
<feature type="helix" evidence="23">
    <location>
        <begin position="350"/>
        <end position="352"/>
    </location>
</feature>
<feature type="turn" evidence="23">
    <location>
        <begin position="357"/>
        <end position="359"/>
    </location>
</feature>
<feature type="strand" evidence="23">
    <location>
        <begin position="363"/>
        <end position="368"/>
    </location>
</feature>
<feature type="turn" evidence="23">
    <location>
        <begin position="372"/>
        <end position="374"/>
    </location>
</feature>
<feature type="helix" evidence="23">
    <location>
        <begin position="381"/>
        <end position="384"/>
    </location>
</feature>
<feature type="helix" evidence="23">
    <location>
        <begin position="388"/>
        <end position="405"/>
    </location>
</feature>
<feature type="strand" evidence="23">
    <location>
        <begin position="410"/>
        <end position="415"/>
    </location>
</feature>
<feature type="helix" evidence="23">
    <location>
        <begin position="422"/>
        <end position="427"/>
    </location>
</feature>
<feature type="helix" evidence="23">
    <location>
        <begin position="433"/>
        <end position="435"/>
    </location>
</feature>
<feature type="turn" evidence="23">
    <location>
        <begin position="436"/>
        <end position="439"/>
    </location>
</feature>
<feature type="helix" evidence="23">
    <location>
        <begin position="443"/>
        <end position="452"/>
    </location>
</feature>
<feature type="turn" evidence="23">
    <location>
        <begin position="459"/>
        <end position="461"/>
    </location>
</feature>
<feature type="strand" evidence="23">
    <location>
        <begin position="462"/>
        <end position="464"/>
    </location>
</feature>
<feature type="helix" evidence="23">
    <location>
        <begin position="466"/>
        <end position="487"/>
    </location>
</feature>
<feature type="strand" evidence="23">
    <location>
        <begin position="493"/>
        <end position="500"/>
    </location>
</feature>
<feature type="helix" evidence="23">
    <location>
        <begin position="504"/>
        <end position="513"/>
    </location>
</feature>
<feature type="helix" evidence="23">
    <location>
        <begin position="518"/>
        <end position="521"/>
    </location>
</feature>
<feature type="turn" evidence="23">
    <location>
        <begin position="524"/>
        <end position="526"/>
    </location>
</feature>
<feature type="strand" evidence="23">
    <location>
        <begin position="527"/>
        <end position="530"/>
    </location>
</feature>
<feature type="helix" evidence="23">
    <location>
        <begin position="532"/>
        <end position="549"/>
    </location>
</feature>
<feature type="helix" evidence="23">
    <location>
        <begin position="551"/>
        <end position="554"/>
    </location>
</feature>
<feature type="helix" evidence="23">
    <location>
        <begin position="561"/>
        <end position="568"/>
    </location>
</feature>
<feature type="turn" evidence="23">
    <location>
        <begin position="569"/>
        <end position="572"/>
    </location>
</feature>
<reference key="1">
    <citation type="submission" date="1997-08" db="EMBL/GenBank/DDBJ databases">
        <title>Human, murine, and lapine acyloxyacyl hydrolases share unique structural features.</title>
        <authorList>
            <person name="Munford R.S."/>
            <person name="Fosmire S."/>
            <person name="Varley A.W."/>
            <person name="Staab J.F."/>
        </authorList>
    </citation>
    <scope>NUCLEOTIDE SEQUENCE [MRNA]</scope>
    <source>
        <strain>C57B1/6</strain>
    </source>
</reference>
<reference key="2">
    <citation type="journal article" date="2005" name="Science">
        <title>The transcriptional landscape of the mammalian genome.</title>
        <authorList>
            <person name="Carninci P."/>
            <person name="Kasukawa T."/>
            <person name="Katayama S."/>
            <person name="Gough J."/>
            <person name="Frith M.C."/>
            <person name="Maeda N."/>
            <person name="Oyama R."/>
            <person name="Ravasi T."/>
            <person name="Lenhard B."/>
            <person name="Wells C."/>
            <person name="Kodzius R."/>
            <person name="Shimokawa K."/>
            <person name="Bajic V.B."/>
            <person name="Brenner S.E."/>
            <person name="Batalov S."/>
            <person name="Forrest A.R."/>
            <person name="Zavolan M."/>
            <person name="Davis M.J."/>
            <person name="Wilming L.G."/>
            <person name="Aidinis V."/>
            <person name="Allen J.E."/>
            <person name="Ambesi-Impiombato A."/>
            <person name="Apweiler R."/>
            <person name="Aturaliya R.N."/>
            <person name="Bailey T.L."/>
            <person name="Bansal M."/>
            <person name="Baxter L."/>
            <person name="Beisel K.W."/>
            <person name="Bersano T."/>
            <person name="Bono H."/>
            <person name="Chalk A.M."/>
            <person name="Chiu K.P."/>
            <person name="Choudhary V."/>
            <person name="Christoffels A."/>
            <person name="Clutterbuck D.R."/>
            <person name="Crowe M.L."/>
            <person name="Dalla E."/>
            <person name="Dalrymple B.P."/>
            <person name="de Bono B."/>
            <person name="Della Gatta G."/>
            <person name="di Bernardo D."/>
            <person name="Down T."/>
            <person name="Engstrom P."/>
            <person name="Fagiolini M."/>
            <person name="Faulkner G."/>
            <person name="Fletcher C.F."/>
            <person name="Fukushima T."/>
            <person name="Furuno M."/>
            <person name="Futaki S."/>
            <person name="Gariboldi M."/>
            <person name="Georgii-Hemming P."/>
            <person name="Gingeras T.R."/>
            <person name="Gojobori T."/>
            <person name="Green R.E."/>
            <person name="Gustincich S."/>
            <person name="Harbers M."/>
            <person name="Hayashi Y."/>
            <person name="Hensch T.K."/>
            <person name="Hirokawa N."/>
            <person name="Hill D."/>
            <person name="Huminiecki L."/>
            <person name="Iacono M."/>
            <person name="Ikeo K."/>
            <person name="Iwama A."/>
            <person name="Ishikawa T."/>
            <person name="Jakt M."/>
            <person name="Kanapin A."/>
            <person name="Katoh M."/>
            <person name="Kawasawa Y."/>
            <person name="Kelso J."/>
            <person name="Kitamura H."/>
            <person name="Kitano H."/>
            <person name="Kollias G."/>
            <person name="Krishnan S.P."/>
            <person name="Kruger A."/>
            <person name="Kummerfeld S.K."/>
            <person name="Kurochkin I.V."/>
            <person name="Lareau L.F."/>
            <person name="Lazarevic D."/>
            <person name="Lipovich L."/>
            <person name="Liu J."/>
            <person name="Liuni S."/>
            <person name="McWilliam S."/>
            <person name="Madan Babu M."/>
            <person name="Madera M."/>
            <person name="Marchionni L."/>
            <person name="Matsuda H."/>
            <person name="Matsuzawa S."/>
            <person name="Miki H."/>
            <person name="Mignone F."/>
            <person name="Miyake S."/>
            <person name="Morris K."/>
            <person name="Mottagui-Tabar S."/>
            <person name="Mulder N."/>
            <person name="Nakano N."/>
            <person name="Nakauchi H."/>
            <person name="Ng P."/>
            <person name="Nilsson R."/>
            <person name="Nishiguchi S."/>
            <person name="Nishikawa S."/>
            <person name="Nori F."/>
            <person name="Ohara O."/>
            <person name="Okazaki Y."/>
            <person name="Orlando V."/>
            <person name="Pang K.C."/>
            <person name="Pavan W.J."/>
            <person name="Pavesi G."/>
            <person name="Pesole G."/>
            <person name="Petrovsky N."/>
            <person name="Piazza S."/>
            <person name="Reed J."/>
            <person name="Reid J.F."/>
            <person name="Ring B.Z."/>
            <person name="Ringwald M."/>
            <person name="Rost B."/>
            <person name="Ruan Y."/>
            <person name="Salzberg S.L."/>
            <person name="Sandelin A."/>
            <person name="Schneider C."/>
            <person name="Schoenbach C."/>
            <person name="Sekiguchi K."/>
            <person name="Semple C.A."/>
            <person name="Seno S."/>
            <person name="Sessa L."/>
            <person name="Sheng Y."/>
            <person name="Shibata Y."/>
            <person name="Shimada H."/>
            <person name="Shimada K."/>
            <person name="Silva D."/>
            <person name="Sinclair B."/>
            <person name="Sperling S."/>
            <person name="Stupka E."/>
            <person name="Sugiura K."/>
            <person name="Sultana R."/>
            <person name="Takenaka Y."/>
            <person name="Taki K."/>
            <person name="Tammoja K."/>
            <person name="Tan S.L."/>
            <person name="Tang S."/>
            <person name="Taylor M.S."/>
            <person name="Tegner J."/>
            <person name="Teichmann S.A."/>
            <person name="Ueda H.R."/>
            <person name="van Nimwegen E."/>
            <person name="Verardo R."/>
            <person name="Wei C.L."/>
            <person name="Yagi K."/>
            <person name="Yamanishi H."/>
            <person name="Zabarovsky E."/>
            <person name="Zhu S."/>
            <person name="Zimmer A."/>
            <person name="Hide W."/>
            <person name="Bult C."/>
            <person name="Grimmond S.M."/>
            <person name="Teasdale R.D."/>
            <person name="Liu E.T."/>
            <person name="Brusic V."/>
            <person name="Quackenbush J."/>
            <person name="Wahlestedt C."/>
            <person name="Mattick J.S."/>
            <person name="Hume D.A."/>
            <person name="Kai C."/>
            <person name="Sasaki D."/>
            <person name="Tomaru Y."/>
            <person name="Fukuda S."/>
            <person name="Kanamori-Katayama M."/>
            <person name="Suzuki M."/>
            <person name="Aoki J."/>
            <person name="Arakawa T."/>
            <person name="Iida J."/>
            <person name="Imamura K."/>
            <person name="Itoh M."/>
            <person name="Kato T."/>
            <person name="Kawaji H."/>
            <person name="Kawagashira N."/>
            <person name="Kawashima T."/>
            <person name="Kojima M."/>
            <person name="Kondo S."/>
            <person name="Konno H."/>
            <person name="Nakano K."/>
            <person name="Ninomiya N."/>
            <person name="Nishio T."/>
            <person name="Okada M."/>
            <person name="Plessy C."/>
            <person name="Shibata K."/>
            <person name="Shiraki T."/>
            <person name="Suzuki S."/>
            <person name="Tagami M."/>
            <person name="Waki K."/>
            <person name="Watahiki A."/>
            <person name="Okamura-Oho Y."/>
            <person name="Suzuki H."/>
            <person name="Kawai J."/>
            <person name="Hayashizaki Y."/>
        </authorList>
    </citation>
    <scope>NUCLEOTIDE SEQUENCE [LARGE SCALE MRNA]</scope>
    <source>
        <strain>C57BL/6J</strain>
        <tissue>Eye</tissue>
    </source>
</reference>
<reference key="3">
    <citation type="journal article" date="2003" name="J. Exp. Med.">
        <title>Stimulus-dependent deacylation of bacterial lipopolysaccharide by dendritic cells.</title>
        <authorList>
            <person name="Lu M."/>
            <person name="Zhang M."/>
            <person name="Kitchens R.L."/>
            <person name="Fosmire S."/>
            <person name="Takashima A."/>
            <person name="Munford R.S."/>
        </authorList>
    </citation>
    <scope>FUNCTION</scope>
    <scope>CATALYTIC ACTIVITY</scope>
    <scope>TISSUE SPECIFICITY</scope>
    <scope>DISRUPTION PHENOTYPE</scope>
</reference>
<reference key="4">
    <citation type="journal article" date="2004" name="Infect. Immun.">
        <title>Identification of acyloxyacyl hydrolase, a lipopolysaccharide-detoxifying enzyme, in the murine urinary tract.</title>
        <authorList>
            <person name="Feulner J.A."/>
            <person name="Lu M."/>
            <person name="Shelton J.M."/>
            <person name="Zhang M."/>
            <person name="Richardson J.A."/>
            <person name="Munford R.S."/>
        </authorList>
    </citation>
    <scope>FUNCTION</scope>
    <scope>CATALYTIC ACTIVITY</scope>
    <scope>SUBUNIT</scope>
    <scope>SUBCELLULAR LOCATION</scope>
    <scope>TISSUE SPECIFICITY</scope>
</reference>
<reference key="5">
    <citation type="journal article" date="2007" name="J. Biol. Chem.">
        <title>A host lipase detoxifies bacterial lipopolysaccharides in the liver and spleen.</title>
        <authorList>
            <person name="Shao B."/>
            <person name="Lu M."/>
            <person name="Katz S.C."/>
            <person name="Varley A.W."/>
            <person name="Hardwick J."/>
            <person name="Rogers T.E."/>
            <person name="Ojogun N."/>
            <person name="Rockey D.C."/>
            <person name="Dematteo R.P."/>
            <person name="Munford R.S."/>
        </authorList>
    </citation>
    <scope>FUNCTION</scope>
    <scope>CATALYTIC ACTIVITY</scope>
    <scope>TISSUE SPECIFICITY</scope>
    <scope>DISRUPTION PHENOTYPE</scope>
</reference>
<reference key="6">
    <citation type="journal article" date="2008" name="Cell Host Microbe">
        <title>Host inactivation of bacterial lipopolysaccharide prevents prolonged tolerance following gram-negative bacterial infection.</title>
        <authorList>
            <person name="Lu M."/>
            <person name="Varley A.W."/>
            <person name="Ohta S."/>
            <person name="Hardwick J."/>
            <person name="Munford R.S."/>
        </authorList>
    </citation>
    <scope>FUNCTION</scope>
    <scope>CATALYTIC ACTIVITY</scope>
    <scope>DISRUPTION PHENOTYPE</scope>
</reference>
<reference key="7">
    <citation type="journal article" date="2009" name="J. Infect. Dis.">
        <title>Overproduction of acyloxyacyl hydrolase by macrophages and dendritic cells prevents prolonged reactions to bacterial lipopolysaccharide in vivo.</title>
        <authorList>
            <person name="Ojogun N."/>
            <person name="Kuang T.Y."/>
            <person name="Shao B."/>
            <person name="Greaves D.R."/>
            <person name="Munford R.S."/>
            <person name="Varley A.W."/>
        </authorList>
    </citation>
    <scope>FUNCTION</scope>
    <scope>CATALYTIC ACTIVITY</scope>
</reference>
<reference key="8">
    <citation type="journal article" date="2017" name="PLoS Pathog.">
        <title>Acyloxyacyl hydrolase promotes the resolution of lipopolysaccharide-induced acute lung injury.</title>
        <authorList>
            <person name="Zou B."/>
            <person name="Jiang W."/>
            <person name="Han H."/>
            <person name="Li J."/>
            <person name="Mao W."/>
            <person name="Tang Z."/>
            <person name="Yang Q."/>
            <person name="Qian G."/>
            <person name="Qian J."/>
            <person name="Zeng W."/>
            <person name="Gu J."/>
            <person name="Chu T."/>
            <person name="Zhu N."/>
            <person name="Zhang W."/>
            <person name="Yan D."/>
            <person name="He R."/>
            <person name="Chu Y."/>
            <person name="Lu M."/>
        </authorList>
    </citation>
    <scope>FUNCTION</scope>
    <scope>TISSUE SPECIFICITY</scope>
    <scope>INDUCTION</scope>
    <scope>DISRUPTION PHENOTYPE</scope>
</reference>
<reference evidence="20 21 22" key="9">
    <citation type="journal article" date="2018" name="Proc. Natl. Acad. Sci. U.S.A.">
        <title>Crystal structure of the mammalian lipopolysaccharide detoxifier.</title>
        <authorList>
            <person name="Gorelik A."/>
            <person name="Illes K."/>
            <person name="Nagar B."/>
        </authorList>
    </citation>
    <scope>X-RAY CRYSTALLOGRAPHY (1.75 ANGSTROMS) OF 23-574 OF MUTANT ALA-262 IN COMPLEX WITH CALCIUM AND THE LIPID A MOIETY OF BACTERIAL LIPOPOLYSACCHARIDE</scope>
    <scope>COFACTOR</scope>
    <scope>SUBUNIT</scope>
    <scope>DISULFIDE BONDS</scope>
    <scope>MUTAGENESIS OF SER-262</scope>
    <scope>ACTIVE SITE</scope>
    <scope>GLYCOSYLATION AT ASN-206; ASN-408 AND ASN-465</scope>
</reference>
<organism>
    <name type="scientific">Mus musculus</name>
    <name type="common">Mouse</name>
    <dbReference type="NCBI Taxonomy" id="10090"/>
    <lineage>
        <taxon>Eukaryota</taxon>
        <taxon>Metazoa</taxon>
        <taxon>Chordata</taxon>
        <taxon>Craniata</taxon>
        <taxon>Vertebrata</taxon>
        <taxon>Euteleostomi</taxon>
        <taxon>Mammalia</taxon>
        <taxon>Eutheria</taxon>
        <taxon>Euarchontoglires</taxon>
        <taxon>Glires</taxon>
        <taxon>Rodentia</taxon>
        <taxon>Myomorpha</taxon>
        <taxon>Muroidea</taxon>
        <taxon>Muridae</taxon>
        <taxon>Murinae</taxon>
        <taxon>Mus</taxon>
        <taxon>Mus</taxon>
    </lineage>
</organism>
<evidence type="ECO:0000250" key="1">
    <source>
        <dbReference type="UniProtKB" id="O18823"/>
    </source>
</evidence>
<evidence type="ECO:0000250" key="2">
    <source>
        <dbReference type="UniProtKB" id="P28039"/>
    </source>
</evidence>
<evidence type="ECO:0000255" key="3"/>
<evidence type="ECO:0000255" key="4">
    <source>
        <dbReference type="PROSITE-ProRule" id="PRU00415"/>
    </source>
</evidence>
<evidence type="ECO:0000269" key="5">
    <source>
    </source>
</evidence>
<evidence type="ECO:0000269" key="6">
    <source>
    </source>
</evidence>
<evidence type="ECO:0000269" key="7">
    <source>
    </source>
</evidence>
<evidence type="ECO:0000269" key="8">
    <source>
    </source>
</evidence>
<evidence type="ECO:0000269" key="9">
    <source>
    </source>
</evidence>
<evidence type="ECO:0000269" key="10">
    <source>
    </source>
</evidence>
<evidence type="ECO:0000269" key="11">
    <source>
    </source>
</evidence>
<evidence type="ECO:0000303" key="12">
    <source>
    </source>
</evidence>
<evidence type="ECO:0000303" key="13">
    <source ref="1"/>
</evidence>
<evidence type="ECO:0000305" key="14">
    <source>
    </source>
</evidence>
<evidence type="ECO:0000305" key="15">
    <source>
    </source>
</evidence>
<evidence type="ECO:0000305" key="16">
    <source>
    </source>
</evidence>
<evidence type="ECO:0000305" key="17">
    <source>
    </source>
</evidence>
<evidence type="ECO:0000305" key="18">
    <source>
    </source>
</evidence>
<evidence type="ECO:0000305" key="19">
    <source>
    </source>
</evidence>
<evidence type="ECO:0007744" key="20">
    <source>
        <dbReference type="PDB" id="5W7D"/>
    </source>
</evidence>
<evidence type="ECO:0007744" key="21">
    <source>
        <dbReference type="PDB" id="5W7E"/>
    </source>
</evidence>
<evidence type="ECO:0007744" key="22">
    <source>
        <dbReference type="PDB" id="5W7F"/>
    </source>
</evidence>
<evidence type="ECO:0007829" key="23">
    <source>
        <dbReference type="PDB" id="5W7D"/>
    </source>
</evidence>
<protein>
    <recommendedName>
        <fullName evidence="13">Acyloxyacyl hydrolase</fullName>
        <ecNumber evidence="14 15 16 17 18">3.1.1.77</ecNumber>
    </recommendedName>
    <component>
        <recommendedName>
            <fullName evidence="2">Acyloxyacyl hydrolase small subunit</fullName>
        </recommendedName>
    </component>
    <component>
        <recommendedName>
            <fullName evidence="2">Acyloxyacyl hydrolase large subunit</fullName>
        </recommendedName>
    </component>
</protein>
<gene>
    <name evidence="12" type="primary">Aoah</name>
</gene>